<feature type="chain" id="PRO_0000102403" description="Endoribonuclease YbeY">
    <location>
        <begin position="1"/>
        <end position="156"/>
    </location>
</feature>
<feature type="binding site" evidence="1">
    <location>
        <position position="122"/>
    </location>
    <ligand>
        <name>Zn(2+)</name>
        <dbReference type="ChEBI" id="CHEBI:29105"/>
        <note>catalytic</note>
    </ligand>
</feature>
<feature type="binding site" evidence="1">
    <location>
        <position position="126"/>
    </location>
    <ligand>
        <name>Zn(2+)</name>
        <dbReference type="ChEBI" id="CHEBI:29105"/>
        <note>catalytic</note>
    </ligand>
</feature>
<feature type="binding site" evidence="1">
    <location>
        <position position="132"/>
    </location>
    <ligand>
        <name>Zn(2+)</name>
        <dbReference type="ChEBI" id="CHEBI:29105"/>
        <note>catalytic</note>
    </ligand>
</feature>
<accession>Q730N3</accession>
<name>YBEY_BACC1</name>
<organism>
    <name type="scientific">Bacillus cereus (strain ATCC 10987 / NRS 248)</name>
    <dbReference type="NCBI Taxonomy" id="222523"/>
    <lineage>
        <taxon>Bacteria</taxon>
        <taxon>Bacillati</taxon>
        <taxon>Bacillota</taxon>
        <taxon>Bacilli</taxon>
        <taxon>Bacillales</taxon>
        <taxon>Bacillaceae</taxon>
        <taxon>Bacillus</taxon>
        <taxon>Bacillus cereus group</taxon>
    </lineage>
</organism>
<dbReference type="EC" id="3.1.-.-" evidence="1"/>
<dbReference type="EMBL" id="AE017194">
    <property type="protein sequence ID" value="AAS43284.1"/>
    <property type="molecule type" value="Genomic_DNA"/>
</dbReference>
<dbReference type="SMR" id="Q730N3"/>
<dbReference type="KEGG" id="bca:BCE_4383"/>
<dbReference type="HOGENOM" id="CLU_106710_3_0_9"/>
<dbReference type="Proteomes" id="UP000002527">
    <property type="component" value="Chromosome"/>
</dbReference>
<dbReference type="GO" id="GO:0005737">
    <property type="term" value="C:cytoplasm"/>
    <property type="evidence" value="ECO:0007669"/>
    <property type="project" value="UniProtKB-SubCell"/>
</dbReference>
<dbReference type="GO" id="GO:0004222">
    <property type="term" value="F:metalloendopeptidase activity"/>
    <property type="evidence" value="ECO:0007669"/>
    <property type="project" value="InterPro"/>
</dbReference>
<dbReference type="GO" id="GO:0004521">
    <property type="term" value="F:RNA endonuclease activity"/>
    <property type="evidence" value="ECO:0007669"/>
    <property type="project" value="UniProtKB-UniRule"/>
</dbReference>
<dbReference type="GO" id="GO:0008270">
    <property type="term" value="F:zinc ion binding"/>
    <property type="evidence" value="ECO:0007669"/>
    <property type="project" value="UniProtKB-UniRule"/>
</dbReference>
<dbReference type="GO" id="GO:0006364">
    <property type="term" value="P:rRNA processing"/>
    <property type="evidence" value="ECO:0007669"/>
    <property type="project" value="UniProtKB-UniRule"/>
</dbReference>
<dbReference type="Gene3D" id="3.40.390.30">
    <property type="entry name" value="Metalloproteases ('zincins'), catalytic domain"/>
    <property type="match status" value="1"/>
</dbReference>
<dbReference type="HAMAP" id="MF_00009">
    <property type="entry name" value="Endoribonucl_YbeY"/>
    <property type="match status" value="1"/>
</dbReference>
<dbReference type="InterPro" id="IPR023091">
    <property type="entry name" value="MetalPrtase_cat_dom_sf_prd"/>
</dbReference>
<dbReference type="InterPro" id="IPR002036">
    <property type="entry name" value="YbeY"/>
</dbReference>
<dbReference type="InterPro" id="IPR020549">
    <property type="entry name" value="YbeY_CS"/>
</dbReference>
<dbReference type="NCBIfam" id="TIGR00043">
    <property type="entry name" value="rRNA maturation RNase YbeY"/>
    <property type="match status" value="1"/>
</dbReference>
<dbReference type="PANTHER" id="PTHR46986">
    <property type="entry name" value="ENDORIBONUCLEASE YBEY, CHLOROPLASTIC"/>
    <property type="match status" value="1"/>
</dbReference>
<dbReference type="PANTHER" id="PTHR46986:SF1">
    <property type="entry name" value="ENDORIBONUCLEASE YBEY, CHLOROPLASTIC"/>
    <property type="match status" value="1"/>
</dbReference>
<dbReference type="Pfam" id="PF02130">
    <property type="entry name" value="YbeY"/>
    <property type="match status" value="1"/>
</dbReference>
<dbReference type="SUPFAM" id="SSF55486">
    <property type="entry name" value="Metalloproteases ('zincins'), catalytic domain"/>
    <property type="match status" value="1"/>
</dbReference>
<dbReference type="PROSITE" id="PS01306">
    <property type="entry name" value="UPF0054"/>
    <property type="match status" value="1"/>
</dbReference>
<sequence length="156" mass="18034">MSLLIDFIDETEEVKEEYVNLIREILGKAAQMEKIEDGAELSVTFVDNERIREINRDYRDKDQPTDVISFAMEEMGEGEMEIVGAEMPRMLGDLIISIPRAKEQAEEYGHSFDRELGFLALHGFLHLLGYDHMTEEDEKEMFGRQKEILEAFGLGR</sequence>
<protein>
    <recommendedName>
        <fullName evidence="1">Endoribonuclease YbeY</fullName>
        <ecNumber evidence="1">3.1.-.-</ecNumber>
    </recommendedName>
</protein>
<keyword id="KW-0963">Cytoplasm</keyword>
<keyword id="KW-0255">Endonuclease</keyword>
<keyword id="KW-0378">Hydrolase</keyword>
<keyword id="KW-0479">Metal-binding</keyword>
<keyword id="KW-0540">Nuclease</keyword>
<keyword id="KW-0690">Ribosome biogenesis</keyword>
<keyword id="KW-0698">rRNA processing</keyword>
<keyword id="KW-0862">Zinc</keyword>
<proteinExistence type="inferred from homology"/>
<evidence type="ECO:0000255" key="1">
    <source>
        <dbReference type="HAMAP-Rule" id="MF_00009"/>
    </source>
</evidence>
<comment type="function">
    <text evidence="1">Single strand-specific metallo-endoribonuclease involved in late-stage 70S ribosome quality control and in maturation of the 3' terminus of the 16S rRNA.</text>
</comment>
<comment type="cofactor">
    <cofactor evidence="1">
        <name>Zn(2+)</name>
        <dbReference type="ChEBI" id="CHEBI:29105"/>
    </cofactor>
    <text evidence="1">Binds 1 zinc ion.</text>
</comment>
<comment type="subcellular location">
    <subcellularLocation>
        <location evidence="1">Cytoplasm</location>
    </subcellularLocation>
</comment>
<comment type="similarity">
    <text evidence="1">Belongs to the endoribonuclease YbeY family.</text>
</comment>
<reference key="1">
    <citation type="journal article" date="2004" name="Nucleic Acids Res.">
        <title>The genome sequence of Bacillus cereus ATCC 10987 reveals metabolic adaptations and a large plasmid related to Bacillus anthracis pXO1.</title>
        <authorList>
            <person name="Rasko D.A."/>
            <person name="Ravel J."/>
            <person name="Oekstad O.A."/>
            <person name="Helgason E."/>
            <person name="Cer R.Z."/>
            <person name="Jiang L."/>
            <person name="Shores K.A."/>
            <person name="Fouts D.E."/>
            <person name="Tourasse N.J."/>
            <person name="Angiuoli S.V."/>
            <person name="Kolonay J.F."/>
            <person name="Nelson W.C."/>
            <person name="Kolstoe A.-B."/>
            <person name="Fraser C.M."/>
            <person name="Read T.D."/>
        </authorList>
    </citation>
    <scope>NUCLEOTIDE SEQUENCE [LARGE SCALE GENOMIC DNA]</scope>
    <source>
        <strain>ATCC 10987 / NRS 248</strain>
    </source>
</reference>
<gene>
    <name evidence="1" type="primary">ybeY</name>
    <name type="ordered locus">BCE_4383</name>
</gene>